<protein>
    <recommendedName>
        <fullName evidence="1">2-hydroxy-3-keto-5-methylthiopentenyl-1-phosphate phosphatase</fullName>
        <shortName evidence="1">HK-MTPenyl-1-P phosphatase</shortName>
        <ecNumber evidence="1">3.1.3.87</ecNumber>
    </recommendedName>
</protein>
<dbReference type="EC" id="3.1.3.87" evidence="1"/>
<dbReference type="EMBL" id="CP000001">
    <property type="protein sequence ID" value="AAU16473.1"/>
    <property type="molecule type" value="Genomic_DNA"/>
</dbReference>
<dbReference type="RefSeq" id="WP_000027478.1">
    <property type="nucleotide sequence ID" value="NC_006274.1"/>
</dbReference>
<dbReference type="SMR" id="Q635P2"/>
<dbReference type="KEGG" id="bcz:BCE33L3794"/>
<dbReference type="PATRIC" id="fig|288681.22.peg.1609"/>
<dbReference type="UniPathway" id="UPA00904">
    <property type="reaction ID" value="UER00877"/>
</dbReference>
<dbReference type="Proteomes" id="UP000002612">
    <property type="component" value="Chromosome"/>
</dbReference>
<dbReference type="GO" id="GO:0043716">
    <property type="term" value="F:2-hydroxy-3-keto-5-methylthiopentenyl-1-phosphate phosphatase activity"/>
    <property type="evidence" value="ECO:0007669"/>
    <property type="project" value="UniProtKB-UniRule"/>
</dbReference>
<dbReference type="GO" id="GO:0019509">
    <property type="term" value="P:L-methionine salvage from methylthioadenosine"/>
    <property type="evidence" value="ECO:0007669"/>
    <property type="project" value="UniProtKB-UniRule"/>
</dbReference>
<dbReference type="CDD" id="cd07524">
    <property type="entry name" value="HAD_Pase"/>
    <property type="match status" value="1"/>
</dbReference>
<dbReference type="Gene3D" id="3.90.1470.20">
    <property type="match status" value="1"/>
</dbReference>
<dbReference type="Gene3D" id="3.40.50.1000">
    <property type="entry name" value="HAD superfamily/HAD-like"/>
    <property type="match status" value="1"/>
</dbReference>
<dbReference type="HAMAP" id="MF_01680">
    <property type="entry name" value="Salvage_MtnX"/>
    <property type="match status" value="1"/>
</dbReference>
<dbReference type="InterPro" id="IPR050849">
    <property type="entry name" value="HAD-like_hydrolase_phosphatase"/>
</dbReference>
<dbReference type="InterPro" id="IPR036412">
    <property type="entry name" value="HAD-like_sf"/>
</dbReference>
<dbReference type="InterPro" id="IPR017718">
    <property type="entry name" value="HAD-SF_hydro_IB_MtnX"/>
</dbReference>
<dbReference type="InterPro" id="IPR006384">
    <property type="entry name" value="HAD_hydro_PyrdxlP_Pase-like"/>
</dbReference>
<dbReference type="InterPro" id="IPR023214">
    <property type="entry name" value="HAD_sf"/>
</dbReference>
<dbReference type="NCBIfam" id="TIGR01489">
    <property type="entry name" value="DKMTPPase-SF"/>
    <property type="match status" value="1"/>
</dbReference>
<dbReference type="NCBIfam" id="TIGR01488">
    <property type="entry name" value="HAD-SF-IB"/>
    <property type="match status" value="1"/>
</dbReference>
<dbReference type="NCBIfam" id="NF007103">
    <property type="entry name" value="PRK09552.1"/>
    <property type="match status" value="1"/>
</dbReference>
<dbReference type="NCBIfam" id="TIGR03333">
    <property type="entry name" value="salvage_mtnX"/>
    <property type="match status" value="1"/>
</dbReference>
<dbReference type="PANTHER" id="PTHR28181:SF2">
    <property type="entry name" value="PHOSPHORIC MONOESTER HYDROLASE"/>
    <property type="match status" value="1"/>
</dbReference>
<dbReference type="PANTHER" id="PTHR28181">
    <property type="entry name" value="UPF0655 PROTEIN YCR015C"/>
    <property type="match status" value="1"/>
</dbReference>
<dbReference type="Pfam" id="PF12710">
    <property type="entry name" value="HAD"/>
    <property type="match status" value="1"/>
</dbReference>
<dbReference type="SUPFAM" id="SSF56784">
    <property type="entry name" value="HAD-like"/>
    <property type="match status" value="1"/>
</dbReference>
<accession>Q635P2</accession>
<reference key="1">
    <citation type="journal article" date="2006" name="J. Bacteriol.">
        <title>Pathogenomic sequence analysis of Bacillus cereus and Bacillus thuringiensis isolates closely related to Bacillus anthracis.</title>
        <authorList>
            <person name="Han C.S."/>
            <person name="Xie G."/>
            <person name="Challacombe J.F."/>
            <person name="Altherr M.R."/>
            <person name="Bhotika S.S."/>
            <person name="Bruce D."/>
            <person name="Campbell C.S."/>
            <person name="Campbell M.L."/>
            <person name="Chen J."/>
            <person name="Chertkov O."/>
            <person name="Cleland C."/>
            <person name="Dimitrijevic M."/>
            <person name="Doggett N.A."/>
            <person name="Fawcett J.J."/>
            <person name="Glavina T."/>
            <person name="Goodwin L.A."/>
            <person name="Hill K.K."/>
            <person name="Hitchcock P."/>
            <person name="Jackson P.J."/>
            <person name="Keim P."/>
            <person name="Kewalramani A.R."/>
            <person name="Longmire J."/>
            <person name="Lucas S."/>
            <person name="Malfatti S."/>
            <person name="McMurry K."/>
            <person name="Meincke L.J."/>
            <person name="Misra M."/>
            <person name="Moseman B.L."/>
            <person name="Mundt M."/>
            <person name="Munk A.C."/>
            <person name="Okinaka R.T."/>
            <person name="Parson-Quintana B."/>
            <person name="Reilly L.P."/>
            <person name="Richardson P."/>
            <person name="Robinson D.L."/>
            <person name="Rubin E."/>
            <person name="Saunders E."/>
            <person name="Tapia R."/>
            <person name="Tesmer J.G."/>
            <person name="Thayer N."/>
            <person name="Thompson L.S."/>
            <person name="Tice H."/>
            <person name="Ticknor L.O."/>
            <person name="Wills P.L."/>
            <person name="Brettin T.S."/>
            <person name="Gilna P."/>
        </authorList>
    </citation>
    <scope>NUCLEOTIDE SEQUENCE [LARGE SCALE GENOMIC DNA]</scope>
    <source>
        <strain>ZK / E33L</strain>
    </source>
</reference>
<comment type="function">
    <text evidence="1">Dephosphorylates 2-hydroxy-3-keto-5-methylthiopentenyl-1-phosphate (HK-MTPenyl-1-P) yielding 1,2-dihydroxy-3-keto-5-methylthiopentene (DHK-MTPene).</text>
</comment>
<comment type="catalytic activity">
    <reaction evidence="1">
        <text>2-hydroxy-5-methylsulfanyl-3-oxopent-1-enyl phosphate + H2O = 1,2-dihydroxy-5-(methylsulfanyl)pent-1-en-3-one + phosphate</text>
        <dbReference type="Rhea" id="RHEA:14481"/>
        <dbReference type="ChEBI" id="CHEBI:15377"/>
        <dbReference type="ChEBI" id="CHEBI:43474"/>
        <dbReference type="ChEBI" id="CHEBI:49252"/>
        <dbReference type="ChEBI" id="CHEBI:59505"/>
        <dbReference type="EC" id="3.1.3.87"/>
    </reaction>
</comment>
<comment type="pathway">
    <text evidence="1">Amino-acid biosynthesis; L-methionine biosynthesis via salvage pathway; L-methionine from S-methyl-5-thio-alpha-D-ribose 1-phosphate: step 4/6.</text>
</comment>
<comment type="similarity">
    <text evidence="1">Belongs to the HAD-like hydrolase superfamily. MtnX family.</text>
</comment>
<name>MTNX_BACCZ</name>
<sequence>MSIQVFCDFDGTITNNDNIMSIMEKFAPPEAEEVKNRILSQELSIQEGVSQLFQLIPTNLHDEIIQFLIETAEIRNGFHEFIQFVNENNISFYVISGGMDFFVYPLLQGLIPKEQIYCNETDFSNEYITVNWPHPCDRLCQNHCGLCKSSLIRKLSDTNDFHIVIGDSITDLQAAKQADKVFARDFLITKCEENHISYTPFETFHDVQTELKHLLGVKL</sequence>
<gene>
    <name evidence="1" type="primary">mtnX</name>
    <name type="ordered locus">BCE33L3794</name>
</gene>
<keyword id="KW-0028">Amino-acid biosynthesis</keyword>
<keyword id="KW-0378">Hydrolase</keyword>
<keyword id="KW-0486">Methionine biosynthesis</keyword>
<proteinExistence type="inferred from homology"/>
<evidence type="ECO:0000255" key="1">
    <source>
        <dbReference type="HAMAP-Rule" id="MF_01680"/>
    </source>
</evidence>
<feature type="chain" id="PRO_0000357479" description="2-hydroxy-3-keto-5-methylthiopentenyl-1-phosphate phosphatase">
    <location>
        <begin position="1"/>
        <end position="219"/>
    </location>
</feature>
<organism>
    <name type="scientific">Bacillus cereus (strain ZK / E33L)</name>
    <dbReference type="NCBI Taxonomy" id="288681"/>
    <lineage>
        <taxon>Bacteria</taxon>
        <taxon>Bacillati</taxon>
        <taxon>Bacillota</taxon>
        <taxon>Bacilli</taxon>
        <taxon>Bacillales</taxon>
        <taxon>Bacillaceae</taxon>
        <taxon>Bacillus</taxon>
        <taxon>Bacillus cereus group</taxon>
    </lineage>
</organism>